<evidence type="ECO:0000255" key="1">
    <source>
        <dbReference type="HAMAP-Rule" id="MF_00711"/>
    </source>
</evidence>
<proteinExistence type="inferred from homology"/>
<reference key="1">
    <citation type="journal article" date="2001" name="Science">
        <title>The genome of the natural genetic engineer Agrobacterium tumefaciens C58.</title>
        <authorList>
            <person name="Wood D.W."/>
            <person name="Setubal J.C."/>
            <person name="Kaul R."/>
            <person name="Monks D.E."/>
            <person name="Kitajima J.P."/>
            <person name="Okura V.K."/>
            <person name="Zhou Y."/>
            <person name="Chen L."/>
            <person name="Wood G.E."/>
            <person name="Almeida N.F. Jr."/>
            <person name="Woo L."/>
            <person name="Chen Y."/>
            <person name="Paulsen I.T."/>
            <person name="Eisen J.A."/>
            <person name="Karp P.D."/>
            <person name="Bovee D. Sr."/>
            <person name="Chapman P."/>
            <person name="Clendenning J."/>
            <person name="Deatherage G."/>
            <person name="Gillet W."/>
            <person name="Grant C."/>
            <person name="Kutyavin T."/>
            <person name="Levy R."/>
            <person name="Li M.-J."/>
            <person name="McClelland E."/>
            <person name="Palmieri A."/>
            <person name="Raymond C."/>
            <person name="Rouse G."/>
            <person name="Saenphimmachak C."/>
            <person name="Wu Z."/>
            <person name="Romero P."/>
            <person name="Gordon D."/>
            <person name="Zhang S."/>
            <person name="Yoo H."/>
            <person name="Tao Y."/>
            <person name="Biddle P."/>
            <person name="Jung M."/>
            <person name="Krespan W."/>
            <person name="Perry M."/>
            <person name="Gordon-Kamm B."/>
            <person name="Liao L."/>
            <person name="Kim S."/>
            <person name="Hendrick C."/>
            <person name="Zhao Z.-Y."/>
            <person name="Dolan M."/>
            <person name="Chumley F."/>
            <person name="Tingey S.V."/>
            <person name="Tomb J.-F."/>
            <person name="Gordon M.P."/>
            <person name="Olson M.V."/>
            <person name="Nester E.W."/>
        </authorList>
    </citation>
    <scope>NUCLEOTIDE SEQUENCE [LARGE SCALE GENOMIC DNA]</scope>
    <source>
        <strain>C58 / ATCC 33970</strain>
    </source>
</reference>
<reference key="2">
    <citation type="journal article" date="2001" name="Science">
        <title>Genome sequence of the plant pathogen and biotechnology agent Agrobacterium tumefaciens C58.</title>
        <authorList>
            <person name="Goodner B."/>
            <person name="Hinkle G."/>
            <person name="Gattung S."/>
            <person name="Miller N."/>
            <person name="Blanchard M."/>
            <person name="Qurollo B."/>
            <person name="Goldman B.S."/>
            <person name="Cao Y."/>
            <person name="Askenazi M."/>
            <person name="Halling C."/>
            <person name="Mullin L."/>
            <person name="Houmiel K."/>
            <person name="Gordon J."/>
            <person name="Vaudin M."/>
            <person name="Iartchouk O."/>
            <person name="Epp A."/>
            <person name="Liu F."/>
            <person name="Wollam C."/>
            <person name="Allinger M."/>
            <person name="Doughty D."/>
            <person name="Scott C."/>
            <person name="Lappas C."/>
            <person name="Markelz B."/>
            <person name="Flanagan C."/>
            <person name="Crowell C."/>
            <person name="Gurson J."/>
            <person name="Lomo C."/>
            <person name="Sear C."/>
            <person name="Strub G."/>
            <person name="Cielo C."/>
            <person name="Slater S."/>
        </authorList>
    </citation>
    <scope>NUCLEOTIDE SEQUENCE [LARGE SCALE GENOMIC DNA]</scope>
    <source>
        <strain>C58 / ATCC 33970</strain>
    </source>
</reference>
<organism>
    <name type="scientific">Agrobacterium fabrum (strain C58 / ATCC 33970)</name>
    <name type="common">Agrobacterium tumefaciens (strain C58)</name>
    <dbReference type="NCBI Taxonomy" id="176299"/>
    <lineage>
        <taxon>Bacteria</taxon>
        <taxon>Pseudomonadati</taxon>
        <taxon>Pseudomonadota</taxon>
        <taxon>Alphaproteobacteria</taxon>
        <taxon>Hyphomicrobiales</taxon>
        <taxon>Rhizobiaceae</taxon>
        <taxon>Rhizobium/Agrobacterium group</taxon>
        <taxon>Agrobacterium</taxon>
        <taxon>Agrobacterium tumefaciens complex</taxon>
    </lineage>
</organism>
<comment type="function">
    <text evidence="1">The glycine cleavage system catalyzes the degradation of glycine. The P protein binds the alpha-amino group of glycine through its pyridoxal phosphate cofactor; CO(2) is released and the remaining methylamine moiety is then transferred to the lipoamide cofactor of the H protein.</text>
</comment>
<comment type="catalytic activity">
    <reaction evidence="1">
        <text>N(6)-[(R)-lipoyl]-L-lysyl-[glycine-cleavage complex H protein] + glycine + H(+) = N(6)-[(R)-S(8)-aminomethyldihydrolipoyl]-L-lysyl-[glycine-cleavage complex H protein] + CO2</text>
        <dbReference type="Rhea" id="RHEA:24304"/>
        <dbReference type="Rhea" id="RHEA-COMP:10494"/>
        <dbReference type="Rhea" id="RHEA-COMP:10495"/>
        <dbReference type="ChEBI" id="CHEBI:15378"/>
        <dbReference type="ChEBI" id="CHEBI:16526"/>
        <dbReference type="ChEBI" id="CHEBI:57305"/>
        <dbReference type="ChEBI" id="CHEBI:83099"/>
        <dbReference type="ChEBI" id="CHEBI:83143"/>
        <dbReference type="EC" id="1.4.4.2"/>
    </reaction>
</comment>
<comment type="cofactor">
    <cofactor evidence="1">
        <name>pyridoxal 5'-phosphate</name>
        <dbReference type="ChEBI" id="CHEBI:597326"/>
    </cofactor>
</comment>
<comment type="subunit">
    <text evidence="1">The glycine cleavage system is composed of four proteins: P, T, L and H.</text>
</comment>
<comment type="similarity">
    <text evidence="1">Belongs to the GcvP family.</text>
</comment>
<keyword id="KW-0560">Oxidoreductase</keyword>
<keyword id="KW-0663">Pyridoxal phosphate</keyword>
<keyword id="KW-1185">Reference proteome</keyword>
<feature type="chain" id="PRO_0000166901" description="Glycine dehydrogenase (decarboxylating)">
    <location>
        <begin position="1"/>
        <end position="954"/>
    </location>
</feature>
<feature type="modified residue" description="N6-(pyridoxal phosphate)lysine" evidence="1">
    <location>
        <position position="704"/>
    </location>
</feature>
<protein>
    <recommendedName>
        <fullName evidence="1">Glycine dehydrogenase (decarboxylating)</fullName>
        <ecNumber evidence="1">1.4.4.2</ecNumber>
    </recommendedName>
    <alternativeName>
        <fullName evidence="1">Glycine cleavage system P-protein</fullName>
    </alternativeName>
    <alternativeName>
        <fullName evidence="1">Glycine decarboxylase</fullName>
    </alternativeName>
    <alternativeName>
        <fullName evidence="1">Glycine dehydrogenase (aminomethyl-transferring)</fullName>
    </alternativeName>
</protein>
<name>GCSP_AGRFC</name>
<accession>Q8UFD6</accession>
<dbReference type="EC" id="1.4.4.2" evidence="1"/>
<dbReference type="EMBL" id="AE007869">
    <property type="protein sequence ID" value="AAK87254.1"/>
    <property type="molecule type" value="Genomic_DNA"/>
</dbReference>
<dbReference type="PIR" id="AF2756">
    <property type="entry name" value="AF2756"/>
</dbReference>
<dbReference type="PIR" id="E97537">
    <property type="entry name" value="E97537"/>
</dbReference>
<dbReference type="RefSeq" id="NP_354469.1">
    <property type="nucleotide sequence ID" value="NC_003062.2"/>
</dbReference>
<dbReference type="RefSeq" id="WP_010971639.1">
    <property type="nucleotide sequence ID" value="NC_003062.2"/>
</dbReference>
<dbReference type="SMR" id="Q8UFD6"/>
<dbReference type="STRING" id="176299.Atu1462"/>
<dbReference type="EnsemblBacteria" id="AAK87254">
    <property type="protein sequence ID" value="AAK87254"/>
    <property type="gene ID" value="Atu1462"/>
</dbReference>
<dbReference type="GeneID" id="1133500"/>
<dbReference type="KEGG" id="atu:Atu1462"/>
<dbReference type="PATRIC" id="fig|176299.10.peg.1485"/>
<dbReference type="eggNOG" id="COG0403">
    <property type="taxonomic scope" value="Bacteria"/>
</dbReference>
<dbReference type="eggNOG" id="COG1003">
    <property type="taxonomic scope" value="Bacteria"/>
</dbReference>
<dbReference type="HOGENOM" id="CLU_004620_4_0_5"/>
<dbReference type="OrthoDB" id="9801272at2"/>
<dbReference type="PhylomeDB" id="Q8UFD6"/>
<dbReference type="BioCyc" id="AGRO:ATU1462-MONOMER"/>
<dbReference type="Proteomes" id="UP000000813">
    <property type="component" value="Chromosome circular"/>
</dbReference>
<dbReference type="GO" id="GO:0005829">
    <property type="term" value="C:cytosol"/>
    <property type="evidence" value="ECO:0007669"/>
    <property type="project" value="TreeGrafter"/>
</dbReference>
<dbReference type="GO" id="GO:0005960">
    <property type="term" value="C:glycine cleavage complex"/>
    <property type="evidence" value="ECO:0007669"/>
    <property type="project" value="TreeGrafter"/>
</dbReference>
<dbReference type="GO" id="GO:0016594">
    <property type="term" value="F:glycine binding"/>
    <property type="evidence" value="ECO:0007669"/>
    <property type="project" value="TreeGrafter"/>
</dbReference>
<dbReference type="GO" id="GO:0004375">
    <property type="term" value="F:glycine dehydrogenase (decarboxylating) activity"/>
    <property type="evidence" value="ECO:0007669"/>
    <property type="project" value="UniProtKB-EC"/>
</dbReference>
<dbReference type="GO" id="GO:0030170">
    <property type="term" value="F:pyridoxal phosphate binding"/>
    <property type="evidence" value="ECO:0007669"/>
    <property type="project" value="TreeGrafter"/>
</dbReference>
<dbReference type="GO" id="GO:0019464">
    <property type="term" value="P:glycine decarboxylation via glycine cleavage system"/>
    <property type="evidence" value="ECO:0007669"/>
    <property type="project" value="UniProtKB-UniRule"/>
</dbReference>
<dbReference type="CDD" id="cd00613">
    <property type="entry name" value="GDC-P"/>
    <property type="match status" value="2"/>
</dbReference>
<dbReference type="FunFam" id="3.40.640.10:FF:000005">
    <property type="entry name" value="Glycine dehydrogenase (decarboxylating), mitochondrial"/>
    <property type="match status" value="1"/>
</dbReference>
<dbReference type="FunFam" id="3.90.1150.10:FF:000007">
    <property type="entry name" value="Glycine dehydrogenase (decarboxylating), mitochondrial"/>
    <property type="match status" value="1"/>
</dbReference>
<dbReference type="FunFam" id="3.40.640.10:FF:000007">
    <property type="entry name" value="glycine dehydrogenase (Decarboxylating), mitochondrial"/>
    <property type="match status" value="1"/>
</dbReference>
<dbReference type="Gene3D" id="3.90.1150.10">
    <property type="entry name" value="Aspartate Aminotransferase, domain 1"/>
    <property type="match status" value="2"/>
</dbReference>
<dbReference type="Gene3D" id="3.40.640.10">
    <property type="entry name" value="Type I PLP-dependent aspartate aminotransferase-like (Major domain)"/>
    <property type="match status" value="2"/>
</dbReference>
<dbReference type="HAMAP" id="MF_00711">
    <property type="entry name" value="GcvP"/>
    <property type="match status" value="1"/>
</dbReference>
<dbReference type="InterPro" id="IPR003437">
    <property type="entry name" value="GcvP"/>
</dbReference>
<dbReference type="InterPro" id="IPR049316">
    <property type="entry name" value="GDC-P_C"/>
</dbReference>
<dbReference type="InterPro" id="IPR049315">
    <property type="entry name" value="GDC-P_N"/>
</dbReference>
<dbReference type="InterPro" id="IPR020581">
    <property type="entry name" value="GDC_P"/>
</dbReference>
<dbReference type="InterPro" id="IPR015424">
    <property type="entry name" value="PyrdxlP-dep_Trfase"/>
</dbReference>
<dbReference type="InterPro" id="IPR015421">
    <property type="entry name" value="PyrdxlP-dep_Trfase_major"/>
</dbReference>
<dbReference type="InterPro" id="IPR015422">
    <property type="entry name" value="PyrdxlP-dep_Trfase_small"/>
</dbReference>
<dbReference type="NCBIfam" id="TIGR00461">
    <property type="entry name" value="gcvP"/>
    <property type="match status" value="1"/>
</dbReference>
<dbReference type="PANTHER" id="PTHR11773:SF1">
    <property type="entry name" value="GLYCINE DEHYDROGENASE (DECARBOXYLATING), MITOCHONDRIAL"/>
    <property type="match status" value="1"/>
</dbReference>
<dbReference type="PANTHER" id="PTHR11773">
    <property type="entry name" value="GLYCINE DEHYDROGENASE, DECARBOXYLATING"/>
    <property type="match status" value="1"/>
</dbReference>
<dbReference type="Pfam" id="PF21478">
    <property type="entry name" value="GcvP2_C"/>
    <property type="match status" value="1"/>
</dbReference>
<dbReference type="Pfam" id="PF02347">
    <property type="entry name" value="GDC-P"/>
    <property type="match status" value="2"/>
</dbReference>
<dbReference type="SUPFAM" id="SSF53383">
    <property type="entry name" value="PLP-dependent transferases"/>
    <property type="match status" value="2"/>
</dbReference>
<gene>
    <name evidence="1" type="primary">gcvP</name>
    <name type="ordered locus">Atu1462</name>
    <name type="ORF">AGR_C_2699</name>
</gene>
<sequence>MTTPTEFHFTDYQPYDFANRRHIGPSPSEMAEMLKVVGYKSLDALIDATVPSSIRQKVPLTWGAALTEREALDRLRETANKNQVLTSLIGQGYYGTITPPVIQRNILENPAWYTAYTPYQPEISQGRLEALLNYQTMVCDLTGLDVANASLLDEATAAAEAMAMCQRVAKSKATAFFVDANCHPQTIALIETRAAPLGWKVIIGNPFTDLDPVDVFGAIFQYPGTHGHVSDFTGLISRLHQTGAIAAVAADLLALTLLKSPGEMGADIAIGTSQRFGVPVGYGGPHAAYMSVKDAHKRSMPGRLVGVSVDARGNRAYRLSLQTREQHIRREKATSNICTAQVLLAVMASMYGVFHGPQGIKAIAQQTHQKAVLMAKGLEKLGYTIEPETFFDTITVEVGHMQGVILRSAVAEGVNLRKVGATKIGMSLDERTRPATLEAVWRAFGGNFSISDFEPDYRLPKDLLRTSQYMTHPIFHMNRAESEMTRYIRRLSDRDLALDRSMIPLGSCTMKLNATAEMLPITWPEFSDIHPFVPANQALGYKEMIDDLSEKLCSVTGYDAFSMQPNSGAQGEYAGLLTIRNYHLANGGTHRDVCLIPTSAHGTNPASAQMVGMKVVPVKVRDNGDIDIDDFRLKAEQYAENLSCCMITYPSTHGVFEETVREICEITHKHGGQVYLDGANMNAMVGLARPGDIGSDVSHLNLHKTFCIPHGGGGPGMGPIGVKAHLAPFLPGHPTTDGREGAVSAAPFGSPSILPISWSYCLMMGGEGLTQATKVAILNANYIAERLKGAYDVLYKSETGRVAHECIIDTRPLADSCGVTVDDVAKRLIDCGFHAPTMSWPVAGTLMIEPTESETKAEIDRFCDAMLAIREEARDIEEGRADKNNNPLKNAPHTVEDLVGEWDRPYSREKGCFPPGAFRIDKYWSPVNRIDNVYGDRNLICTCPPMEAYAEAAE</sequence>